<name>RLMD_ACIAD</name>
<protein>
    <recommendedName>
        <fullName evidence="1">23S rRNA (uracil(1939)-C(5))-methyltransferase RlmD</fullName>
        <ecNumber evidence="1">2.1.1.190</ecNumber>
    </recommendedName>
    <alternativeName>
        <fullName evidence="1">23S rRNA(m5U1939)-methyltransferase</fullName>
    </alternativeName>
</protein>
<sequence>MKKHASSRSKSATVYTFRIESFSHEGRGIAHFGEFAEHPQTKHGKKVFVRYALPGEVVRAKITHETKRFEEGELIEILDQPSIDRIVPVCPHFGVCGGCSMQHITPNQQIQIKQHVLASHLQHFAGLTVNEWLTPVRSLRADYRRRARVGVRYIPAKQKLIMGFREHGSNRLTPIQSCAVLDQRLSQALPELYDVLNRLVAKAEIGHIELAMGDDEVSLLVRHLNTLPDSDITQLCDYAQHKNWQLYLQAKGSDSLKRVDRSGAEMRLHYAVPAFNLNFAFSPLDFTQVNATVNQQMLKLACDLLKLQKGEHVLDLFCGLGNFSLPLARCVGDTGRVVGVEGSEEMVQRAFENAAQNALHNVEFYSQDLTKDFSHHSWANQGFDALLIDPPRSGAFEIMHYIANFEAKRIVYVSCNPATLARDAGVLAQHGYQLKKVGVMDMFTHTEHVESIALFEKIQEIND</sequence>
<comment type="function">
    <text evidence="1">Catalyzes the formation of 5-methyl-uridine at position 1939 (m5U1939) in 23S rRNA.</text>
</comment>
<comment type="catalytic activity">
    <reaction evidence="1">
        <text>uridine(1939) in 23S rRNA + S-adenosyl-L-methionine = 5-methyluridine(1939) in 23S rRNA + S-adenosyl-L-homocysteine + H(+)</text>
        <dbReference type="Rhea" id="RHEA:42908"/>
        <dbReference type="Rhea" id="RHEA-COMP:10278"/>
        <dbReference type="Rhea" id="RHEA-COMP:10279"/>
        <dbReference type="ChEBI" id="CHEBI:15378"/>
        <dbReference type="ChEBI" id="CHEBI:57856"/>
        <dbReference type="ChEBI" id="CHEBI:59789"/>
        <dbReference type="ChEBI" id="CHEBI:65315"/>
        <dbReference type="ChEBI" id="CHEBI:74447"/>
        <dbReference type="EC" id="2.1.1.190"/>
    </reaction>
</comment>
<comment type="similarity">
    <text evidence="1">Belongs to the class I-like SAM-binding methyltransferase superfamily. RNA M5U methyltransferase family. RlmD subfamily.</text>
</comment>
<gene>
    <name evidence="1" type="primary">rlmD</name>
    <name type="synonym">rumA</name>
    <name type="ordered locus">ACIAD3069</name>
</gene>
<feature type="chain" id="PRO_0000161886" description="23S rRNA (uracil(1939)-C(5))-methyltransferase RlmD">
    <location>
        <begin position="1"/>
        <end position="463"/>
    </location>
</feature>
<feature type="domain" description="TRAM" evidence="1">
    <location>
        <begin position="8"/>
        <end position="76"/>
    </location>
</feature>
<feature type="active site" description="Nucleophile" evidence="1">
    <location>
        <position position="415"/>
    </location>
</feature>
<feature type="binding site" evidence="1">
    <location>
        <position position="90"/>
    </location>
    <ligand>
        <name>[4Fe-4S] cluster</name>
        <dbReference type="ChEBI" id="CHEBI:49883"/>
    </ligand>
</feature>
<feature type="binding site" evidence="1">
    <location>
        <position position="96"/>
    </location>
    <ligand>
        <name>[4Fe-4S] cluster</name>
        <dbReference type="ChEBI" id="CHEBI:49883"/>
    </ligand>
</feature>
<feature type="binding site" evidence="1">
    <location>
        <position position="99"/>
    </location>
    <ligand>
        <name>[4Fe-4S] cluster</name>
        <dbReference type="ChEBI" id="CHEBI:49883"/>
    </ligand>
</feature>
<feature type="binding site" evidence="1">
    <location>
        <position position="178"/>
    </location>
    <ligand>
        <name>[4Fe-4S] cluster</name>
        <dbReference type="ChEBI" id="CHEBI:49883"/>
    </ligand>
</feature>
<feature type="binding site" evidence="1">
    <location>
        <position position="288"/>
    </location>
    <ligand>
        <name>S-adenosyl-L-methionine</name>
        <dbReference type="ChEBI" id="CHEBI:59789"/>
    </ligand>
</feature>
<feature type="binding site" evidence="1">
    <location>
        <position position="317"/>
    </location>
    <ligand>
        <name>S-adenosyl-L-methionine</name>
        <dbReference type="ChEBI" id="CHEBI:59789"/>
    </ligand>
</feature>
<feature type="binding site" evidence="1">
    <location>
        <position position="322"/>
    </location>
    <ligand>
        <name>S-adenosyl-L-methionine</name>
        <dbReference type="ChEBI" id="CHEBI:59789"/>
    </ligand>
</feature>
<feature type="binding site" evidence="1">
    <location>
        <position position="341"/>
    </location>
    <ligand>
        <name>S-adenosyl-L-methionine</name>
        <dbReference type="ChEBI" id="CHEBI:59789"/>
    </ligand>
</feature>
<feature type="binding site" evidence="1">
    <location>
        <position position="368"/>
    </location>
    <ligand>
        <name>S-adenosyl-L-methionine</name>
        <dbReference type="ChEBI" id="CHEBI:59789"/>
    </ligand>
</feature>
<feature type="binding site" evidence="1">
    <location>
        <position position="389"/>
    </location>
    <ligand>
        <name>S-adenosyl-L-methionine</name>
        <dbReference type="ChEBI" id="CHEBI:59789"/>
    </ligand>
</feature>
<accession>Q6F847</accession>
<dbReference type="EC" id="2.1.1.190" evidence="1"/>
<dbReference type="EMBL" id="CR543861">
    <property type="protein sequence ID" value="CAG69768.1"/>
    <property type="molecule type" value="Genomic_DNA"/>
</dbReference>
<dbReference type="RefSeq" id="WP_004924469.1">
    <property type="nucleotide sequence ID" value="NC_005966.1"/>
</dbReference>
<dbReference type="SMR" id="Q6F847"/>
<dbReference type="STRING" id="202950.GCA_001485005_02728"/>
<dbReference type="GeneID" id="45235290"/>
<dbReference type="KEGG" id="aci:ACIAD3069"/>
<dbReference type="eggNOG" id="COG2265">
    <property type="taxonomic scope" value="Bacteria"/>
</dbReference>
<dbReference type="HOGENOM" id="CLU_014689_8_2_6"/>
<dbReference type="OrthoDB" id="9804590at2"/>
<dbReference type="BioCyc" id="ASP62977:ACIAD_RS13875-MONOMER"/>
<dbReference type="Proteomes" id="UP000000430">
    <property type="component" value="Chromosome"/>
</dbReference>
<dbReference type="GO" id="GO:0051539">
    <property type="term" value="F:4 iron, 4 sulfur cluster binding"/>
    <property type="evidence" value="ECO:0007669"/>
    <property type="project" value="UniProtKB-KW"/>
</dbReference>
<dbReference type="GO" id="GO:0005506">
    <property type="term" value="F:iron ion binding"/>
    <property type="evidence" value="ECO:0007669"/>
    <property type="project" value="UniProtKB-UniRule"/>
</dbReference>
<dbReference type="GO" id="GO:0003723">
    <property type="term" value="F:RNA binding"/>
    <property type="evidence" value="ECO:0007669"/>
    <property type="project" value="InterPro"/>
</dbReference>
<dbReference type="GO" id="GO:0070041">
    <property type="term" value="F:rRNA (uridine-C5-)-methyltransferase activity"/>
    <property type="evidence" value="ECO:0007669"/>
    <property type="project" value="UniProtKB-UniRule"/>
</dbReference>
<dbReference type="GO" id="GO:0070475">
    <property type="term" value="P:rRNA base methylation"/>
    <property type="evidence" value="ECO:0007669"/>
    <property type="project" value="TreeGrafter"/>
</dbReference>
<dbReference type="CDD" id="cd02440">
    <property type="entry name" value="AdoMet_MTases"/>
    <property type="match status" value="1"/>
</dbReference>
<dbReference type="FunFam" id="3.40.50.150:FF:000009">
    <property type="entry name" value="23S rRNA (Uracil(1939)-C(5))-methyltransferase RlmD"/>
    <property type="match status" value="1"/>
</dbReference>
<dbReference type="Gene3D" id="2.40.50.1070">
    <property type="match status" value="1"/>
</dbReference>
<dbReference type="Gene3D" id="2.40.50.140">
    <property type="entry name" value="Nucleic acid-binding proteins"/>
    <property type="match status" value="1"/>
</dbReference>
<dbReference type="Gene3D" id="3.40.50.150">
    <property type="entry name" value="Vaccinia Virus protein VP39"/>
    <property type="match status" value="1"/>
</dbReference>
<dbReference type="HAMAP" id="MF_01010">
    <property type="entry name" value="23SrRNA_methyltr_RlmD"/>
    <property type="match status" value="1"/>
</dbReference>
<dbReference type="InterPro" id="IPR001566">
    <property type="entry name" value="23S_rRNA_MeTrfase_RlmD"/>
</dbReference>
<dbReference type="InterPro" id="IPR030390">
    <property type="entry name" value="MeTrfase_TrmA_AS"/>
</dbReference>
<dbReference type="InterPro" id="IPR012340">
    <property type="entry name" value="NA-bd_OB-fold"/>
</dbReference>
<dbReference type="InterPro" id="IPR029063">
    <property type="entry name" value="SAM-dependent_MTases_sf"/>
</dbReference>
<dbReference type="InterPro" id="IPR002792">
    <property type="entry name" value="TRAM_dom"/>
</dbReference>
<dbReference type="InterPro" id="IPR010280">
    <property type="entry name" value="U5_MeTrfase_fam"/>
</dbReference>
<dbReference type="NCBIfam" id="NF009639">
    <property type="entry name" value="PRK13168.1"/>
    <property type="match status" value="1"/>
</dbReference>
<dbReference type="NCBIfam" id="TIGR00479">
    <property type="entry name" value="rumA"/>
    <property type="match status" value="1"/>
</dbReference>
<dbReference type="PANTHER" id="PTHR11061:SF49">
    <property type="entry name" value="23S RRNA (URACIL(1939)-C(5))-METHYLTRANSFERASE RLMD"/>
    <property type="match status" value="1"/>
</dbReference>
<dbReference type="PANTHER" id="PTHR11061">
    <property type="entry name" value="RNA M5U METHYLTRANSFERASE"/>
    <property type="match status" value="1"/>
</dbReference>
<dbReference type="Pfam" id="PF01938">
    <property type="entry name" value="TRAM"/>
    <property type="match status" value="1"/>
</dbReference>
<dbReference type="Pfam" id="PF05958">
    <property type="entry name" value="tRNA_U5-meth_tr"/>
    <property type="match status" value="1"/>
</dbReference>
<dbReference type="SUPFAM" id="SSF50249">
    <property type="entry name" value="Nucleic acid-binding proteins"/>
    <property type="match status" value="1"/>
</dbReference>
<dbReference type="SUPFAM" id="SSF53335">
    <property type="entry name" value="S-adenosyl-L-methionine-dependent methyltransferases"/>
    <property type="match status" value="1"/>
</dbReference>
<dbReference type="PROSITE" id="PS51687">
    <property type="entry name" value="SAM_MT_RNA_M5U"/>
    <property type="match status" value="1"/>
</dbReference>
<dbReference type="PROSITE" id="PS50926">
    <property type="entry name" value="TRAM"/>
    <property type="match status" value="1"/>
</dbReference>
<dbReference type="PROSITE" id="PS01230">
    <property type="entry name" value="TRMA_1"/>
    <property type="match status" value="1"/>
</dbReference>
<evidence type="ECO:0000255" key="1">
    <source>
        <dbReference type="HAMAP-Rule" id="MF_01010"/>
    </source>
</evidence>
<reference key="1">
    <citation type="journal article" date="2004" name="Nucleic Acids Res.">
        <title>Unique features revealed by the genome sequence of Acinetobacter sp. ADP1, a versatile and naturally transformation competent bacterium.</title>
        <authorList>
            <person name="Barbe V."/>
            <person name="Vallenet D."/>
            <person name="Fonknechten N."/>
            <person name="Kreimeyer A."/>
            <person name="Oztas S."/>
            <person name="Labarre L."/>
            <person name="Cruveiller S."/>
            <person name="Robert C."/>
            <person name="Duprat S."/>
            <person name="Wincker P."/>
            <person name="Ornston L.N."/>
            <person name="Weissenbach J."/>
            <person name="Marliere P."/>
            <person name="Cohen G.N."/>
            <person name="Medigue C."/>
        </authorList>
    </citation>
    <scope>NUCLEOTIDE SEQUENCE [LARGE SCALE GENOMIC DNA]</scope>
    <source>
        <strain>ATCC 33305 / BD413 / ADP1</strain>
    </source>
</reference>
<organism>
    <name type="scientific">Acinetobacter baylyi (strain ATCC 33305 / BD413 / ADP1)</name>
    <dbReference type="NCBI Taxonomy" id="62977"/>
    <lineage>
        <taxon>Bacteria</taxon>
        <taxon>Pseudomonadati</taxon>
        <taxon>Pseudomonadota</taxon>
        <taxon>Gammaproteobacteria</taxon>
        <taxon>Moraxellales</taxon>
        <taxon>Moraxellaceae</taxon>
        <taxon>Acinetobacter</taxon>
    </lineage>
</organism>
<keyword id="KW-0004">4Fe-4S</keyword>
<keyword id="KW-0408">Iron</keyword>
<keyword id="KW-0411">Iron-sulfur</keyword>
<keyword id="KW-0479">Metal-binding</keyword>
<keyword id="KW-0489">Methyltransferase</keyword>
<keyword id="KW-0698">rRNA processing</keyword>
<keyword id="KW-0949">S-adenosyl-L-methionine</keyword>
<keyword id="KW-0808">Transferase</keyword>
<proteinExistence type="inferred from homology"/>